<accession>Q6P8C4</accession>
<feature type="chain" id="PRO_0000136768" description="H/ACA ribonucleoprotein complex subunit 2-like protein">
    <location>
        <begin position="1"/>
        <end position="149"/>
    </location>
</feature>
<keyword id="KW-0539">Nucleus</keyword>
<keyword id="KW-1185">Reference proteome</keyword>
<keyword id="KW-0687">Ribonucleoprotein</keyword>
<keyword id="KW-0690">Ribosome biogenesis</keyword>
<keyword id="KW-0694">RNA-binding</keyword>
<keyword id="KW-0698">rRNA processing</keyword>
<evidence type="ECO:0000250" key="1"/>
<evidence type="ECO:0000250" key="2">
    <source>
        <dbReference type="UniProtKB" id="Q9NX24"/>
    </source>
</evidence>
<evidence type="ECO:0000305" key="3"/>
<gene>
    <name type="primary">nhp2</name>
    <name type="synonym">nola2</name>
</gene>
<name>NHP2_XENTR</name>
<dbReference type="EMBL" id="BC061305">
    <property type="protein sequence ID" value="AAH61305.1"/>
    <property type="molecule type" value="mRNA"/>
</dbReference>
<dbReference type="RefSeq" id="NP_988989.1">
    <property type="nucleotide sequence ID" value="NM_203658.1"/>
</dbReference>
<dbReference type="SMR" id="Q6P8C4"/>
<dbReference type="FunCoup" id="Q6P8C4">
    <property type="interactions" value="1606"/>
</dbReference>
<dbReference type="STRING" id="8364.ENSXETP00000048272"/>
<dbReference type="PaxDb" id="8364-ENSXETP00000014709"/>
<dbReference type="DNASU" id="394586"/>
<dbReference type="GeneID" id="394586"/>
<dbReference type="KEGG" id="xtr:394586"/>
<dbReference type="AGR" id="Xenbase:XB-GENE-973261"/>
<dbReference type="CTD" id="55651"/>
<dbReference type="Xenbase" id="XB-GENE-973261">
    <property type="gene designation" value="nhp2"/>
</dbReference>
<dbReference type="eggNOG" id="KOG3167">
    <property type="taxonomic scope" value="Eukaryota"/>
</dbReference>
<dbReference type="HOGENOM" id="CLU_084513_1_0_1"/>
<dbReference type="InParanoid" id="Q6P8C4"/>
<dbReference type="OMA" id="EDNYEAR"/>
<dbReference type="OrthoDB" id="5364946at2759"/>
<dbReference type="PhylomeDB" id="Q6P8C4"/>
<dbReference type="TreeFam" id="TF105839"/>
<dbReference type="Proteomes" id="UP000008143">
    <property type="component" value="Chromosome 3"/>
</dbReference>
<dbReference type="Bgee" id="ENSXETG00000006731">
    <property type="expression patterns" value="Expressed in ovary and 13 other cell types or tissues"/>
</dbReference>
<dbReference type="GO" id="GO:0005730">
    <property type="term" value="C:nucleolus"/>
    <property type="evidence" value="ECO:0007669"/>
    <property type="project" value="UniProtKB-SubCell"/>
</dbReference>
<dbReference type="GO" id="GO:0005732">
    <property type="term" value="C:sno(s)RNA-containing ribonucleoprotein complex"/>
    <property type="evidence" value="ECO:0000250"/>
    <property type="project" value="UniProtKB"/>
</dbReference>
<dbReference type="GO" id="GO:0005697">
    <property type="term" value="C:telomerase holoenzyme complex"/>
    <property type="evidence" value="ECO:0000250"/>
    <property type="project" value="UniProtKB"/>
</dbReference>
<dbReference type="GO" id="GO:0003723">
    <property type="term" value="F:RNA binding"/>
    <property type="evidence" value="ECO:0007669"/>
    <property type="project" value="UniProtKB-KW"/>
</dbReference>
<dbReference type="GO" id="GO:0031118">
    <property type="term" value="P:rRNA pseudouridine synthesis"/>
    <property type="evidence" value="ECO:0000250"/>
    <property type="project" value="UniProtKB"/>
</dbReference>
<dbReference type="GO" id="GO:0007004">
    <property type="term" value="P:telomere maintenance via telomerase"/>
    <property type="evidence" value="ECO:0000250"/>
    <property type="project" value="UniProtKB"/>
</dbReference>
<dbReference type="FunFam" id="3.30.1330.30:FF:000016">
    <property type="entry name" value="H/ACA ribonucleoprotein complex subunit 2"/>
    <property type="match status" value="1"/>
</dbReference>
<dbReference type="Gene3D" id="3.30.1330.30">
    <property type="match status" value="1"/>
</dbReference>
<dbReference type="InterPro" id="IPR050257">
    <property type="entry name" value="eL8/uL1-like"/>
</dbReference>
<dbReference type="InterPro" id="IPR002415">
    <property type="entry name" value="H/ACA_rnp_Nhp2-like"/>
</dbReference>
<dbReference type="InterPro" id="IPR029064">
    <property type="entry name" value="Ribosomal_eL30-like_sf"/>
</dbReference>
<dbReference type="InterPro" id="IPR004037">
    <property type="entry name" value="Ribosomal_eL8-like_CS"/>
</dbReference>
<dbReference type="InterPro" id="IPR004038">
    <property type="entry name" value="Ribosomal_eL8/eL30/eS12/Gad45"/>
</dbReference>
<dbReference type="InterPro" id="IPR018492">
    <property type="entry name" value="Ribosomal_eL8/Nhp2"/>
</dbReference>
<dbReference type="PANTHER" id="PTHR23105">
    <property type="entry name" value="RIBOSOMAL PROTEIN L7AE FAMILY MEMBER"/>
    <property type="match status" value="1"/>
</dbReference>
<dbReference type="Pfam" id="PF01248">
    <property type="entry name" value="Ribosomal_L7Ae"/>
    <property type="match status" value="1"/>
</dbReference>
<dbReference type="PRINTS" id="PR00881">
    <property type="entry name" value="L7ARS6FAMILY"/>
</dbReference>
<dbReference type="PRINTS" id="PR00883">
    <property type="entry name" value="NUCLEARHMG"/>
</dbReference>
<dbReference type="SUPFAM" id="SSF55315">
    <property type="entry name" value="L30e-like"/>
    <property type="match status" value="1"/>
</dbReference>
<dbReference type="PROSITE" id="PS01082">
    <property type="entry name" value="RIBOSOMAL_L7AE"/>
    <property type="match status" value="1"/>
</dbReference>
<proteinExistence type="evidence at transcript level"/>
<protein>
    <recommendedName>
        <fullName>H/ACA ribonucleoprotein complex subunit 2-like protein</fullName>
    </recommendedName>
    <alternativeName>
        <fullName>Nucleolar protein family A member 2-like protein</fullName>
    </alternativeName>
    <alternativeName>
        <fullName>snoRNP protein NHP2-like protein</fullName>
    </alternativeName>
</protein>
<reference key="1">
    <citation type="submission" date="2003-11" db="EMBL/GenBank/DDBJ databases">
        <authorList>
            <consortium name="NIH - Xenopus Gene Collection (XGC) project"/>
        </authorList>
    </citation>
    <scope>NUCLEOTIDE SEQUENCE [LARGE SCALE MRNA]</scope>
    <source>
        <tissue>Embryo</tissue>
    </source>
</reference>
<comment type="function">
    <text evidence="1">Required for ribosome biogenesis. Part of a complex which catalyzes pseudouridylation of rRNA. This involves the isomerization of uridine such that the ribose is subsequently attached to C5, instead of the normal N1. Pseudouridine ('psi') residues may serve to stabilize the conformation of rRNAs (By similarity).</text>
</comment>
<comment type="subunit">
    <text evidence="2">Component of the small nucleolar ribonucleoprotein particle containing H/ACA-type snoRNAs (H/ACA snoRNPs). Component of the telomerase holoenzyme complex.</text>
</comment>
<comment type="subcellular location">
    <subcellularLocation>
        <location evidence="1">Nucleus</location>
        <location evidence="1">Nucleolus</location>
    </subcellularLocation>
</comment>
<comment type="similarity">
    <text evidence="3">Belongs to the eukaryotic ribosomal protein eL8 family.</text>
</comment>
<sequence length="149" mass="16729">MTKAKKEESEEVPETPSKSYDELLAYLNPIAKPLAGRKLTKKLYKCVKKAIKQKNIRRGVKEVQKFINKGEKGIVVMAGDTLPIEVYCHIPVMCEDRGIPYSYVPSKSDLGAAAGSKRPTCVILIKPHEDYQEAYDECLEDVQALPLPY</sequence>
<organism>
    <name type="scientific">Xenopus tropicalis</name>
    <name type="common">Western clawed frog</name>
    <name type="synonym">Silurana tropicalis</name>
    <dbReference type="NCBI Taxonomy" id="8364"/>
    <lineage>
        <taxon>Eukaryota</taxon>
        <taxon>Metazoa</taxon>
        <taxon>Chordata</taxon>
        <taxon>Craniata</taxon>
        <taxon>Vertebrata</taxon>
        <taxon>Euteleostomi</taxon>
        <taxon>Amphibia</taxon>
        <taxon>Batrachia</taxon>
        <taxon>Anura</taxon>
        <taxon>Pipoidea</taxon>
        <taxon>Pipidae</taxon>
        <taxon>Xenopodinae</taxon>
        <taxon>Xenopus</taxon>
        <taxon>Silurana</taxon>
    </lineage>
</organism>